<reference key="1">
    <citation type="submission" date="2008-10" db="EMBL/GenBank/DDBJ databases">
        <title>Genome sequence of Bacillus cereus AH820.</title>
        <authorList>
            <person name="Dodson R.J."/>
            <person name="Durkin A.S."/>
            <person name="Rosovitz M.J."/>
            <person name="Rasko D.A."/>
            <person name="Hoffmaster A."/>
            <person name="Ravel J."/>
            <person name="Sutton G."/>
        </authorList>
    </citation>
    <scope>NUCLEOTIDE SEQUENCE [LARGE SCALE GENOMIC DNA]</scope>
    <source>
        <strain>AH820</strain>
    </source>
</reference>
<dbReference type="EMBL" id="CP001283">
    <property type="protein sequence ID" value="ACK87949.1"/>
    <property type="molecule type" value="Genomic_DNA"/>
</dbReference>
<dbReference type="RefSeq" id="WP_000135311.1">
    <property type="nucleotide sequence ID" value="NC_011773.1"/>
</dbReference>
<dbReference type="SMR" id="B7JS31"/>
<dbReference type="GeneID" id="83638371"/>
<dbReference type="KEGG" id="bcu:BCAH820_4773"/>
<dbReference type="HOGENOM" id="CLU_092403_0_1_9"/>
<dbReference type="Proteomes" id="UP000001363">
    <property type="component" value="Chromosome"/>
</dbReference>
<dbReference type="GO" id="GO:0015935">
    <property type="term" value="C:small ribosomal subunit"/>
    <property type="evidence" value="ECO:0007669"/>
    <property type="project" value="InterPro"/>
</dbReference>
<dbReference type="GO" id="GO:0019843">
    <property type="term" value="F:rRNA binding"/>
    <property type="evidence" value="ECO:0007669"/>
    <property type="project" value="UniProtKB-UniRule"/>
</dbReference>
<dbReference type="GO" id="GO:0003735">
    <property type="term" value="F:structural constituent of ribosome"/>
    <property type="evidence" value="ECO:0007669"/>
    <property type="project" value="InterPro"/>
</dbReference>
<dbReference type="GO" id="GO:0042274">
    <property type="term" value="P:ribosomal small subunit biogenesis"/>
    <property type="evidence" value="ECO:0007669"/>
    <property type="project" value="TreeGrafter"/>
</dbReference>
<dbReference type="GO" id="GO:0006412">
    <property type="term" value="P:translation"/>
    <property type="evidence" value="ECO:0007669"/>
    <property type="project" value="UniProtKB-UniRule"/>
</dbReference>
<dbReference type="CDD" id="cd00165">
    <property type="entry name" value="S4"/>
    <property type="match status" value="1"/>
</dbReference>
<dbReference type="FunFam" id="1.10.1050.10:FF:000001">
    <property type="entry name" value="30S ribosomal protein S4"/>
    <property type="match status" value="1"/>
</dbReference>
<dbReference type="FunFam" id="3.10.290.10:FF:000001">
    <property type="entry name" value="30S ribosomal protein S4"/>
    <property type="match status" value="1"/>
</dbReference>
<dbReference type="Gene3D" id="1.10.1050.10">
    <property type="entry name" value="Ribosomal Protein S4 Delta 41, Chain A, domain 1"/>
    <property type="match status" value="1"/>
</dbReference>
<dbReference type="Gene3D" id="3.10.290.10">
    <property type="entry name" value="RNA-binding S4 domain"/>
    <property type="match status" value="1"/>
</dbReference>
<dbReference type="HAMAP" id="MF_01306_B">
    <property type="entry name" value="Ribosomal_uS4_B"/>
    <property type="match status" value="1"/>
</dbReference>
<dbReference type="InterPro" id="IPR022801">
    <property type="entry name" value="Ribosomal_uS4"/>
</dbReference>
<dbReference type="InterPro" id="IPR005709">
    <property type="entry name" value="Ribosomal_uS4_bac-type"/>
</dbReference>
<dbReference type="InterPro" id="IPR018079">
    <property type="entry name" value="Ribosomal_uS4_CS"/>
</dbReference>
<dbReference type="InterPro" id="IPR001912">
    <property type="entry name" value="Ribosomal_uS4_N"/>
</dbReference>
<dbReference type="InterPro" id="IPR002942">
    <property type="entry name" value="S4_RNA-bd"/>
</dbReference>
<dbReference type="InterPro" id="IPR036986">
    <property type="entry name" value="S4_RNA-bd_sf"/>
</dbReference>
<dbReference type="NCBIfam" id="NF003717">
    <property type="entry name" value="PRK05327.1"/>
    <property type="match status" value="1"/>
</dbReference>
<dbReference type="NCBIfam" id="TIGR01017">
    <property type="entry name" value="rpsD_bact"/>
    <property type="match status" value="1"/>
</dbReference>
<dbReference type="PANTHER" id="PTHR11831">
    <property type="entry name" value="30S 40S RIBOSOMAL PROTEIN"/>
    <property type="match status" value="1"/>
</dbReference>
<dbReference type="PANTHER" id="PTHR11831:SF4">
    <property type="entry name" value="SMALL RIBOSOMAL SUBUNIT PROTEIN US4M"/>
    <property type="match status" value="1"/>
</dbReference>
<dbReference type="Pfam" id="PF00163">
    <property type="entry name" value="Ribosomal_S4"/>
    <property type="match status" value="1"/>
</dbReference>
<dbReference type="Pfam" id="PF01479">
    <property type="entry name" value="S4"/>
    <property type="match status" value="1"/>
</dbReference>
<dbReference type="SMART" id="SM01390">
    <property type="entry name" value="Ribosomal_S4"/>
    <property type="match status" value="1"/>
</dbReference>
<dbReference type="SMART" id="SM00363">
    <property type="entry name" value="S4"/>
    <property type="match status" value="1"/>
</dbReference>
<dbReference type="SUPFAM" id="SSF55174">
    <property type="entry name" value="Alpha-L RNA-binding motif"/>
    <property type="match status" value="1"/>
</dbReference>
<dbReference type="PROSITE" id="PS00632">
    <property type="entry name" value="RIBOSOMAL_S4"/>
    <property type="match status" value="1"/>
</dbReference>
<dbReference type="PROSITE" id="PS50889">
    <property type="entry name" value="S4"/>
    <property type="match status" value="1"/>
</dbReference>
<sequence>MARYTGPAWKLSRRLGISLSGTGKELEKRPYAPGPHGPNQRKKLSEYGLQLQEKQKLRHMYGMTERQFRRTFDQAGKMPGKHGENFMILLEARLDNLVYRMGLARTRRAARQLVNHGHIMVDGARVDIPSYRVKPGQTISVREKSNNLVVVKEAIEVNNFVPEYLTFDADKLEATYTRHAERAELPAEINEALIVEFYSR</sequence>
<comment type="function">
    <text evidence="1">One of the primary rRNA binding proteins, it binds directly to 16S rRNA where it nucleates assembly of the body of the 30S subunit.</text>
</comment>
<comment type="function">
    <text evidence="1">With S5 and S12 plays an important role in translational accuracy.</text>
</comment>
<comment type="subunit">
    <text evidence="1">Part of the 30S ribosomal subunit. Contacts protein S5. The interaction surface between S4 and S5 is involved in control of translational fidelity.</text>
</comment>
<comment type="similarity">
    <text evidence="1">Belongs to the universal ribosomal protein uS4 family.</text>
</comment>
<protein>
    <recommendedName>
        <fullName evidence="1">Small ribosomal subunit protein uS4</fullName>
    </recommendedName>
    <alternativeName>
        <fullName evidence="3">30S ribosomal protein S4</fullName>
    </alternativeName>
</protein>
<accession>B7JS31</accession>
<name>RS4_BACC0</name>
<gene>
    <name evidence="1" type="primary">rpsD</name>
    <name type="ordered locus">BCAH820_4773</name>
</gene>
<organism>
    <name type="scientific">Bacillus cereus (strain AH820)</name>
    <dbReference type="NCBI Taxonomy" id="405535"/>
    <lineage>
        <taxon>Bacteria</taxon>
        <taxon>Bacillati</taxon>
        <taxon>Bacillota</taxon>
        <taxon>Bacilli</taxon>
        <taxon>Bacillales</taxon>
        <taxon>Bacillaceae</taxon>
        <taxon>Bacillus</taxon>
        <taxon>Bacillus cereus group</taxon>
    </lineage>
</organism>
<feature type="chain" id="PRO_1000140683" description="Small ribosomal subunit protein uS4">
    <location>
        <begin position="1"/>
        <end position="200"/>
    </location>
</feature>
<feature type="domain" description="S4 RNA-binding" evidence="1">
    <location>
        <begin position="92"/>
        <end position="152"/>
    </location>
</feature>
<feature type="region of interest" description="Disordered" evidence="2">
    <location>
        <begin position="22"/>
        <end position="42"/>
    </location>
</feature>
<proteinExistence type="inferred from homology"/>
<keyword id="KW-0687">Ribonucleoprotein</keyword>
<keyword id="KW-0689">Ribosomal protein</keyword>
<keyword id="KW-0694">RNA-binding</keyword>
<keyword id="KW-0699">rRNA-binding</keyword>
<evidence type="ECO:0000255" key="1">
    <source>
        <dbReference type="HAMAP-Rule" id="MF_01306"/>
    </source>
</evidence>
<evidence type="ECO:0000256" key="2">
    <source>
        <dbReference type="SAM" id="MobiDB-lite"/>
    </source>
</evidence>
<evidence type="ECO:0000305" key="3"/>